<protein>
    <recommendedName>
        <fullName evidence="1">Aspartate carbamoyltransferase catalytic subunit</fullName>
        <ecNumber evidence="1">2.1.3.2</ecNumber>
    </recommendedName>
    <alternativeName>
        <fullName evidence="1">Aspartate transcarbamylase</fullName>
        <shortName evidence="1">ATCase</shortName>
    </alternativeName>
</protein>
<evidence type="ECO:0000255" key="1">
    <source>
        <dbReference type="HAMAP-Rule" id="MF_00001"/>
    </source>
</evidence>
<dbReference type="EC" id="2.1.3.2" evidence="1"/>
<dbReference type="EMBL" id="CP000673">
    <property type="protein sequence ID" value="EDK35364.1"/>
    <property type="molecule type" value="Genomic_DNA"/>
</dbReference>
<dbReference type="RefSeq" id="WP_012103694.1">
    <property type="nucleotide sequence ID" value="NC_009706.1"/>
</dbReference>
<dbReference type="SMR" id="A5N2L8"/>
<dbReference type="STRING" id="431943.CKL_3361"/>
<dbReference type="KEGG" id="ckl:CKL_3361"/>
<dbReference type="eggNOG" id="COG0540">
    <property type="taxonomic scope" value="Bacteria"/>
</dbReference>
<dbReference type="HOGENOM" id="CLU_043846_1_2_9"/>
<dbReference type="UniPathway" id="UPA00070">
    <property type="reaction ID" value="UER00116"/>
</dbReference>
<dbReference type="Proteomes" id="UP000002411">
    <property type="component" value="Chromosome"/>
</dbReference>
<dbReference type="GO" id="GO:0016597">
    <property type="term" value="F:amino acid binding"/>
    <property type="evidence" value="ECO:0007669"/>
    <property type="project" value="InterPro"/>
</dbReference>
<dbReference type="GO" id="GO:0004070">
    <property type="term" value="F:aspartate carbamoyltransferase activity"/>
    <property type="evidence" value="ECO:0007669"/>
    <property type="project" value="UniProtKB-UniRule"/>
</dbReference>
<dbReference type="GO" id="GO:0006207">
    <property type="term" value="P:'de novo' pyrimidine nucleobase biosynthetic process"/>
    <property type="evidence" value="ECO:0007669"/>
    <property type="project" value="InterPro"/>
</dbReference>
<dbReference type="GO" id="GO:0044205">
    <property type="term" value="P:'de novo' UMP biosynthetic process"/>
    <property type="evidence" value="ECO:0007669"/>
    <property type="project" value="UniProtKB-UniRule"/>
</dbReference>
<dbReference type="GO" id="GO:0006520">
    <property type="term" value="P:amino acid metabolic process"/>
    <property type="evidence" value="ECO:0007669"/>
    <property type="project" value="InterPro"/>
</dbReference>
<dbReference type="FunFam" id="3.40.50.1370:FF:000002">
    <property type="entry name" value="Aspartate carbamoyltransferase 2"/>
    <property type="match status" value="1"/>
</dbReference>
<dbReference type="Gene3D" id="3.40.50.1370">
    <property type="entry name" value="Aspartate/ornithine carbamoyltransferase"/>
    <property type="match status" value="2"/>
</dbReference>
<dbReference type="HAMAP" id="MF_00001">
    <property type="entry name" value="Asp_carb_tr"/>
    <property type="match status" value="1"/>
</dbReference>
<dbReference type="InterPro" id="IPR006132">
    <property type="entry name" value="Asp/Orn_carbamoyltranf_P-bd"/>
</dbReference>
<dbReference type="InterPro" id="IPR006130">
    <property type="entry name" value="Asp/Orn_carbamoylTrfase"/>
</dbReference>
<dbReference type="InterPro" id="IPR036901">
    <property type="entry name" value="Asp/Orn_carbamoylTrfase_sf"/>
</dbReference>
<dbReference type="InterPro" id="IPR002082">
    <property type="entry name" value="Asp_carbamoyltransf"/>
</dbReference>
<dbReference type="InterPro" id="IPR006131">
    <property type="entry name" value="Asp_carbamoyltransf_Asp/Orn-bd"/>
</dbReference>
<dbReference type="NCBIfam" id="TIGR00670">
    <property type="entry name" value="asp_carb_tr"/>
    <property type="match status" value="1"/>
</dbReference>
<dbReference type="NCBIfam" id="NF002032">
    <property type="entry name" value="PRK00856.1"/>
    <property type="match status" value="1"/>
</dbReference>
<dbReference type="PANTHER" id="PTHR45753:SF6">
    <property type="entry name" value="ASPARTATE CARBAMOYLTRANSFERASE"/>
    <property type="match status" value="1"/>
</dbReference>
<dbReference type="PANTHER" id="PTHR45753">
    <property type="entry name" value="ORNITHINE CARBAMOYLTRANSFERASE, MITOCHONDRIAL"/>
    <property type="match status" value="1"/>
</dbReference>
<dbReference type="Pfam" id="PF00185">
    <property type="entry name" value="OTCace"/>
    <property type="match status" value="1"/>
</dbReference>
<dbReference type="Pfam" id="PF02729">
    <property type="entry name" value="OTCace_N"/>
    <property type="match status" value="1"/>
</dbReference>
<dbReference type="PRINTS" id="PR00100">
    <property type="entry name" value="AOTCASE"/>
</dbReference>
<dbReference type="PRINTS" id="PR00101">
    <property type="entry name" value="ATCASE"/>
</dbReference>
<dbReference type="SUPFAM" id="SSF53671">
    <property type="entry name" value="Aspartate/ornithine carbamoyltransferase"/>
    <property type="match status" value="1"/>
</dbReference>
<dbReference type="PROSITE" id="PS00097">
    <property type="entry name" value="CARBAMOYLTRANSFERASE"/>
    <property type="match status" value="1"/>
</dbReference>
<organism>
    <name type="scientific">Clostridium kluyveri (strain ATCC 8527 / DSM 555 / NBRC 12016 / NCIMB 10680 / K1)</name>
    <dbReference type="NCBI Taxonomy" id="431943"/>
    <lineage>
        <taxon>Bacteria</taxon>
        <taxon>Bacillati</taxon>
        <taxon>Bacillota</taxon>
        <taxon>Clostridia</taxon>
        <taxon>Eubacteriales</taxon>
        <taxon>Clostridiaceae</taxon>
        <taxon>Clostridium</taxon>
    </lineage>
</organism>
<reference key="1">
    <citation type="journal article" date="2008" name="Proc. Natl. Acad. Sci. U.S.A.">
        <title>The genome of Clostridium kluyveri, a strict anaerobe with unique metabolic features.</title>
        <authorList>
            <person name="Seedorf H."/>
            <person name="Fricke W.F."/>
            <person name="Veith B."/>
            <person name="Brueggemann H."/>
            <person name="Liesegang H."/>
            <person name="Strittmatter A."/>
            <person name="Miethke M."/>
            <person name="Buckel W."/>
            <person name="Hinderberger J."/>
            <person name="Li F."/>
            <person name="Hagemeier C."/>
            <person name="Thauer R.K."/>
            <person name="Gottschalk G."/>
        </authorList>
    </citation>
    <scope>NUCLEOTIDE SEQUENCE [LARGE SCALE GENOMIC DNA]</scope>
    <source>
        <strain>ATCC 8527 / DSM 555 / NBRC 12016 / NCIMB 10680 / K1</strain>
    </source>
</reference>
<comment type="function">
    <text evidence="1">Catalyzes the condensation of carbamoyl phosphate and aspartate to form carbamoyl aspartate and inorganic phosphate, the committed step in the de novo pyrimidine nucleotide biosynthesis pathway.</text>
</comment>
<comment type="catalytic activity">
    <reaction evidence="1">
        <text>carbamoyl phosphate + L-aspartate = N-carbamoyl-L-aspartate + phosphate + H(+)</text>
        <dbReference type="Rhea" id="RHEA:20013"/>
        <dbReference type="ChEBI" id="CHEBI:15378"/>
        <dbReference type="ChEBI" id="CHEBI:29991"/>
        <dbReference type="ChEBI" id="CHEBI:32814"/>
        <dbReference type="ChEBI" id="CHEBI:43474"/>
        <dbReference type="ChEBI" id="CHEBI:58228"/>
        <dbReference type="EC" id="2.1.3.2"/>
    </reaction>
</comment>
<comment type="pathway">
    <text evidence="1">Pyrimidine metabolism; UMP biosynthesis via de novo pathway; (S)-dihydroorotate from bicarbonate: step 2/3.</text>
</comment>
<comment type="subunit">
    <text evidence="1">Heterododecamer (2C3:3R2) of six catalytic PyrB chains organized as two trimers (C3), and six regulatory PyrI chains organized as three dimers (R2).</text>
</comment>
<comment type="similarity">
    <text evidence="1">Belongs to the aspartate/ornithine carbamoyltransferase superfamily. ATCase family.</text>
</comment>
<keyword id="KW-0665">Pyrimidine biosynthesis</keyword>
<keyword id="KW-1185">Reference proteome</keyword>
<keyword id="KW-0808">Transferase</keyword>
<gene>
    <name evidence="1" type="primary">pyrB</name>
    <name type="ordered locus">CKL_3361</name>
</gene>
<name>PYRB_CLOK5</name>
<accession>A5N2L8</accession>
<sequence length="306" mass="34840">MLKGRHLIDAMDFSIEELEEIFKLSNEIISREKEFSHICEGKLLATLFYEPSTRTRLSFESAMLRLGGKVMGFSEPGSSSASKGESIADTIRVISCYADIAAMRHPKEGAPKIAAMYSNIPVINAGDGGHQHPTQTLTDLLTVKSIKGRLSNLKIGCCGDLKFGRTVHSLIKAMSRYENNSFTLISPEELKIPNYLKKELNSKNVKYEETKNLEDSIESLDILYMTRVQRERFFNEEDYIRLKDSYILDKGKISRAAKDMIVLHPLPRVNEISYEIDKDPRAYYFKQAKYGMYVRMALMIKLLGIQ</sequence>
<proteinExistence type="inferred from homology"/>
<feature type="chain" id="PRO_1000073724" description="Aspartate carbamoyltransferase catalytic subunit">
    <location>
        <begin position="1"/>
        <end position="306"/>
    </location>
</feature>
<feature type="binding site" evidence="1">
    <location>
        <position position="54"/>
    </location>
    <ligand>
        <name>carbamoyl phosphate</name>
        <dbReference type="ChEBI" id="CHEBI:58228"/>
    </ligand>
</feature>
<feature type="binding site" evidence="1">
    <location>
        <position position="55"/>
    </location>
    <ligand>
        <name>carbamoyl phosphate</name>
        <dbReference type="ChEBI" id="CHEBI:58228"/>
    </ligand>
</feature>
<feature type="binding site" evidence="1">
    <location>
        <position position="83"/>
    </location>
    <ligand>
        <name>L-aspartate</name>
        <dbReference type="ChEBI" id="CHEBI:29991"/>
    </ligand>
</feature>
<feature type="binding site" evidence="1">
    <location>
        <position position="104"/>
    </location>
    <ligand>
        <name>carbamoyl phosphate</name>
        <dbReference type="ChEBI" id="CHEBI:58228"/>
    </ligand>
</feature>
<feature type="binding site" evidence="1">
    <location>
        <position position="132"/>
    </location>
    <ligand>
        <name>carbamoyl phosphate</name>
        <dbReference type="ChEBI" id="CHEBI:58228"/>
    </ligand>
</feature>
<feature type="binding site" evidence="1">
    <location>
        <position position="135"/>
    </location>
    <ligand>
        <name>carbamoyl phosphate</name>
        <dbReference type="ChEBI" id="CHEBI:58228"/>
    </ligand>
</feature>
<feature type="binding site" evidence="1">
    <location>
        <position position="165"/>
    </location>
    <ligand>
        <name>L-aspartate</name>
        <dbReference type="ChEBI" id="CHEBI:29991"/>
    </ligand>
</feature>
<feature type="binding site" evidence="1">
    <location>
        <position position="227"/>
    </location>
    <ligand>
        <name>L-aspartate</name>
        <dbReference type="ChEBI" id="CHEBI:29991"/>
    </ligand>
</feature>
<feature type="binding site" evidence="1">
    <location>
        <position position="266"/>
    </location>
    <ligand>
        <name>carbamoyl phosphate</name>
        <dbReference type="ChEBI" id="CHEBI:58228"/>
    </ligand>
</feature>
<feature type="binding site" evidence="1">
    <location>
        <position position="267"/>
    </location>
    <ligand>
        <name>carbamoyl phosphate</name>
        <dbReference type="ChEBI" id="CHEBI:58228"/>
    </ligand>
</feature>